<comment type="function">
    <text evidence="1">One of the primary rRNA binding proteins, it binds directly near the 3'-end of the 23S rRNA, where it nucleates assembly of the 50S subunit.</text>
</comment>
<comment type="subunit">
    <text evidence="1">Part of the 50S ribosomal subunit. Forms a cluster with proteins L14 and L19.</text>
</comment>
<comment type="similarity">
    <text evidence="1">Belongs to the universal ribosomal protein uL3 family.</text>
</comment>
<name>RL3_AMOA5</name>
<sequence>MLGIIGKKLGMTTLYDEAGRSVPCTVITGGPCVVTQIKNIEKDGYTAVQLGYDDKKEKNTVKPLMGHFQKAQTTPKRKLVEFKEFGKELGKEIQLGQTIQLHDIFVEGEYVDAIGLSKGKGFQGVVKRHGFSGVGGKSHGQHNRERAPGAIGACSTPSRVFKGMRMAGRTGGQRVKITNLRIMKLVPEKNILVISGSVPGAKNGYIILEK</sequence>
<protein>
    <recommendedName>
        <fullName evidence="1">Large ribosomal subunit protein uL3</fullName>
    </recommendedName>
    <alternativeName>
        <fullName evidence="2">50S ribosomal protein L3</fullName>
    </alternativeName>
</protein>
<feature type="chain" id="PRO_1000141819" description="Large ribosomal subunit protein uL3">
    <location>
        <begin position="1"/>
        <end position="210"/>
    </location>
</feature>
<reference key="1">
    <citation type="journal article" date="2010" name="J. Bacteriol.">
        <title>The genome of the amoeba symbiont 'Candidatus Amoebophilus asiaticus' reveals common mechanisms for host cell interaction among amoeba-associated bacteria.</title>
        <authorList>
            <person name="Schmitz-Esser S."/>
            <person name="Tischler P."/>
            <person name="Arnold R."/>
            <person name="Montanaro J."/>
            <person name="Wagner M."/>
            <person name="Rattei T."/>
            <person name="Horn M."/>
        </authorList>
    </citation>
    <scope>NUCLEOTIDE SEQUENCE [LARGE SCALE GENOMIC DNA]</scope>
    <source>
        <strain>5a2</strain>
    </source>
</reference>
<evidence type="ECO:0000255" key="1">
    <source>
        <dbReference type="HAMAP-Rule" id="MF_01325"/>
    </source>
</evidence>
<evidence type="ECO:0000305" key="2"/>
<dbReference type="EMBL" id="CP001102">
    <property type="protein sequence ID" value="ACE05642.1"/>
    <property type="molecule type" value="Genomic_DNA"/>
</dbReference>
<dbReference type="RefSeq" id="WP_012472407.1">
    <property type="nucleotide sequence ID" value="NC_010830.1"/>
</dbReference>
<dbReference type="SMR" id="B3EUM3"/>
<dbReference type="STRING" id="452471.Aasi_0197"/>
<dbReference type="KEGG" id="aas:Aasi_0197"/>
<dbReference type="eggNOG" id="COG0087">
    <property type="taxonomic scope" value="Bacteria"/>
</dbReference>
<dbReference type="HOGENOM" id="CLU_044142_4_1_10"/>
<dbReference type="OrthoDB" id="9806135at2"/>
<dbReference type="Proteomes" id="UP000001227">
    <property type="component" value="Chromosome"/>
</dbReference>
<dbReference type="GO" id="GO:0022625">
    <property type="term" value="C:cytosolic large ribosomal subunit"/>
    <property type="evidence" value="ECO:0007669"/>
    <property type="project" value="TreeGrafter"/>
</dbReference>
<dbReference type="GO" id="GO:0019843">
    <property type="term" value="F:rRNA binding"/>
    <property type="evidence" value="ECO:0007669"/>
    <property type="project" value="UniProtKB-UniRule"/>
</dbReference>
<dbReference type="GO" id="GO:0003735">
    <property type="term" value="F:structural constituent of ribosome"/>
    <property type="evidence" value="ECO:0007669"/>
    <property type="project" value="InterPro"/>
</dbReference>
<dbReference type="GO" id="GO:0006412">
    <property type="term" value="P:translation"/>
    <property type="evidence" value="ECO:0007669"/>
    <property type="project" value="UniProtKB-UniRule"/>
</dbReference>
<dbReference type="FunFam" id="2.40.30.10:FF:000047">
    <property type="entry name" value="50S ribosomal protein L3"/>
    <property type="match status" value="1"/>
</dbReference>
<dbReference type="FunFam" id="3.30.160.810:FF:000001">
    <property type="entry name" value="50S ribosomal protein L3"/>
    <property type="match status" value="1"/>
</dbReference>
<dbReference type="Gene3D" id="3.30.160.810">
    <property type="match status" value="1"/>
</dbReference>
<dbReference type="Gene3D" id="2.40.30.10">
    <property type="entry name" value="Translation factors"/>
    <property type="match status" value="1"/>
</dbReference>
<dbReference type="HAMAP" id="MF_01325_B">
    <property type="entry name" value="Ribosomal_uL3_B"/>
    <property type="match status" value="1"/>
</dbReference>
<dbReference type="InterPro" id="IPR000597">
    <property type="entry name" value="Ribosomal_uL3"/>
</dbReference>
<dbReference type="InterPro" id="IPR019927">
    <property type="entry name" value="Ribosomal_uL3_bac/org-type"/>
</dbReference>
<dbReference type="InterPro" id="IPR019926">
    <property type="entry name" value="Ribosomal_uL3_CS"/>
</dbReference>
<dbReference type="InterPro" id="IPR009000">
    <property type="entry name" value="Transl_B-barrel_sf"/>
</dbReference>
<dbReference type="NCBIfam" id="TIGR03625">
    <property type="entry name" value="L3_bact"/>
    <property type="match status" value="1"/>
</dbReference>
<dbReference type="PANTHER" id="PTHR11229">
    <property type="entry name" value="50S RIBOSOMAL PROTEIN L3"/>
    <property type="match status" value="1"/>
</dbReference>
<dbReference type="PANTHER" id="PTHR11229:SF16">
    <property type="entry name" value="LARGE RIBOSOMAL SUBUNIT PROTEIN UL3C"/>
    <property type="match status" value="1"/>
</dbReference>
<dbReference type="Pfam" id="PF00297">
    <property type="entry name" value="Ribosomal_L3"/>
    <property type="match status" value="1"/>
</dbReference>
<dbReference type="SUPFAM" id="SSF50447">
    <property type="entry name" value="Translation proteins"/>
    <property type="match status" value="1"/>
</dbReference>
<dbReference type="PROSITE" id="PS00474">
    <property type="entry name" value="RIBOSOMAL_L3"/>
    <property type="match status" value="1"/>
</dbReference>
<gene>
    <name evidence="1" type="primary">rplC</name>
    <name type="ordered locus">Aasi_0197</name>
</gene>
<proteinExistence type="inferred from homology"/>
<organism>
    <name type="scientific">Amoebophilus asiaticus (strain 5a2)</name>
    <dbReference type="NCBI Taxonomy" id="452471"/>
    <lineage>
        <taxon>Bacteria</taxon>
        <taxon>Pseudomonadati</taxon>
        <taxon>Bacteroidota</taxon>
        <taxon>Cytophagia</taxon>
        <taxon>Cytophagales</taxon>
        <taxon>Amoebophilaceae</taxon>
        <taxon>Candidatus Amoebophilus</taxon>
    </lineage>
</organism>
<keyword id="KW-1185">Reference proteome</keyword>
<keyword id="KW-0687">Ribonucleoprotein</keyword>
<keyword id="KW-0689">Ribosomal protein</keyword>
<keyword id="KW-0694">RNA-binding</keyword>
<keyword id="KW-0699">rRNA-binding</keyword>
<accession>B3EUM3</accession>